<organism>
    <name type="scientific">Rhodobacter capsulatus (strain ATCC BAA-309 / NBRC 16581 / SB1003)</name>
    <dbReference type="NCBI Taxonomy" id="272942"/>
    <lineage>
        <taxon>Bacteria</taxon>
        <taxon>Pseudomonadati</taxon>
        <taxon>Pseudomonadota</taxon>
        <taxon>Alphaproteobacteria</taxon>
        <taxon>Rhodobacterales</taxon>
        <taxon>Rhodobacter group</taxon>
        <taxon>Rhodobacter</taxon>
    </lineage>
</organism>
<proteinExistence type="predicted"/>
<name>NIFA_RHOCB</name>
<feature type="chain" id="PRO_0000410439" description="Nif-specific regulatory protein">
    <location>
        <begin position="1"/>
        <end position="579"/>
    </location>
</feature>
<feature type="domain" description="GAF">
    <location>
        <begin position="40"/>
        <end position="187"/>
    </location>
</feature>
<feature type="domain" description="Sigma-54 factor interaction" evidence="3">
    <location>
        <begin position="226"/>
        <end position="454"/>
    </location>
</feature>
<feature type="repeat" description="1">
    <location>
        <begin position="505"/>
        <end position="506"/>
    </location>
</feature>
<feature type="repeat" description="2">
    <location>
        <begin position="507"/>
        <end position="508"/>
    </location>
</feature>
<feature type="repeat" description="3">
    <location>
        <begin position="509"/>
        <end position="510"/>
    </location>
</feature>
<feature type="repeat" description="4">
    <location>
        <begin position="511"/>
        <end position="512"/>
    </location>
</feature>
<feature type="repeat" description="5">
    <location>
        <begin position="513"/>
        <end position="514"/>
    </location>
</feature>
<feature type="repeat" description="6">
    <location>
        <begin position="515"/>
        <end position="516"/>
    </location>
</feature>
<feature type="repeat" description="7">
    <location>
        <begin position="517"/>
        <end position="518"/>
    </location>
</feature>
<feature type="DNA-binding region" description="H-T-H motif" evidence="1">
    <location>
        <begin position="551"/>
        <end position="570"/>
    </location>
</feature>
<feature type="region of interest" description="Inter-domain linker">
    <location>
        <begin position="464"/>
        <end position="536"/>
    </location>
</feature>
<feature type="region of interest" description="Disordered" evidence="4">
    <location>
        <begin position="502"/>
        <end position="529"/>
    </location>
</feature>
<feature type="region of interest" description="7 X 2 AA tandem repeats of X-P">
    <location>
        <begin position="505"/>
        <end position="518"/>
    </location>
</feature>
<feature type="region of interest" description="C-terminal DNA-binding domain">
    <location>
        <begin position="537"/>
        <end position="579"/>
    </location>
</feature>
<feature type="compositionally biased region" description="Pro residues" evidence="4">
    <location>
        <begin position="505"/>
        <end position="520"/>
    </location>
</feature>
<feature type="binding site" evidence="3">
    <location>
        <begin position="254"/>
        <end position="261"/>
    </location>
    <ligand>
        <name>ATP</name>
        <dbReference type="ChEBI" id="CHEBI:30616"/>
    </ligand>
</feature>
<feature type="binding site" evidence="3">
    <location>
        <begin position="317"/>
        <end position="326"/>
    </location>
    <ligand>
        <name>ATP</name>
        <dbReference type="ChEBI" id="CHEBI:30616"/>
    </ligand>
</feature>
<feature type="binding site" evidence="2">
    <location>
        <position position="468"/>
    </location>
    <ligand>
        <name>a divalent metal cation</name>
        <dbReference type="ChEBI" id="CHEBI:60240"/>
    </ligand>
</feature>
<feature type="binding site" evidence="2">
    <location>
        <position position="473"/>
    </location>
    <ligand>
        <name>a divalent metal cation</name>
        <dbReference type="ChEBI" id="CHEBI:60240"/>
    </ligand>
</feature>
<evidence type="ECO:0000250" key="1"/>
<evidence type="ECO:0000250" key="2">
    <source>
        <dbReference type="UniProtKB" id="P05407"/>
    </source>
</evidence>
<evidence type="ECO:0000255" key="3">
    <source>
        <dbReference type="PROSITE-ProRule" id="PRU00193"/>
    </source>
</evidence>
<evidence type="ECO:0000256" key="4">
    <source>
        <dbReference type="SAM" id="MobiDB-lite"/>
    </source>
</evidence>
<evidence type="ECO:0000305" key="5"/>
<sequence length="579" mass="62898">MTDQQSRPASPRRRSTQSIADRLALDALYEIAKTFAAAPDPVAEVPQIFNVLSSFLDLRHGVLALLAEPGEGAGVNPYVIAATAFQRSPEAPAADVLPDAVARIVFRSGVPFVSFDLAAEFGAEAVPKRLRDAGQTLIAVPLRDPERSHFVLGVLAAYRSHDHNRSGFSDADVRVLTMVASLLEQALRFRRRIARDRERALEDTRRMLQTVTEQRGPAAPVSLDGIVGSSPAIAEVVAQIKRVASTRMPVLLRGESGTGKELFARAVHAQSPRAKGPFIRVNCAALSETLLESELFGHEKGAFTGATALKKGRFELADGGTLFLDEIGEISPAFQSKLLRVLQEGEFERVGGAKTIKVDTRIVAATNRDLEDAVARGQFRADLYFRICVVPIVLPPLRNRKSDIKPLAQLFLDRFNKQNATNVKFAADAFDQICRCQFPGNVRELENCVNRAAALSDGAIVLAEELACRQGACLSAELFRLQDGTSPIGGLAVGRVITPTVRVSAPPPEPAPAPEPAPEAPPREEVPLRTKTAQLSREELLRALESAGWVQAKAARLLGMTPRQIAYALQKFEIELRKI</sequence>
<comment type="function">
    <text>Required for activation of most nif operons, which are directly involved in nitrogen fixation.</text>
</comment>
<comment type="subunit">
    <text>Interacts with sigma-54.</text>
</comment>
<comment type="sequence caution" evidence="5">
    <conflict type="frameshift">
        <sequence resource="EMBL-CDS" id="CAA30920"/>
    </conflict>
</comment>
<accession>D5ARW9</accession>
<accession>P09434</accession>
<accession>Q8RU04</accession>
<protein>
    <recommendedName>
        <fullName>Nif-specific regulatory protein</fullName>
    </recommendedName>
</protein>
<keyword id="KW-0010">Activator</keyword>
<keyword id="KW-0067">ATP-binding</keyword>
<keyword id="KW-0238">DNA-binding</keyword>
<keyword id="KW-0479">Metal-binding</keyword>
<keyword id="KW-0535">Nitrogen fixation</keyword>
<keyword id="KW-0547">Nucleotide-binding</keyword>
<keyword id="KW-1185">Reference proteome</keyword>
<keyword id="KW-0677">Repeat</keyword>
<keyword id="KW-0804">Transcription</keyword>
<keyword id="KW-0805">Transcription regulation</keyword>
<keyword id="KW-0902">Two-component regulatory system</keyword>
<dbReference type="EMBL" id="CP001312">
    <property type="protein sequence ID" value="ADE86991.1"/>
    <property type="molecule type" value="Genomic_DNA"/>
</dbReference>
<dbReference type="EMBL" id="X12358">
    <property type="protein sequence ID" value="CAA30920.1"/>
    <property type="status" value="ALT_FRAME"/>
    <property type="molecule type" value="Genomic_DNA"/>
</dbReference>
<dbReference type="PIR" id="S03828">
    <property type="entry name" value="S03828"/>
</dbReference>
<dbReference type="RefSeq" id="WP_013068963.1">
    <property type="nucleotide sequence ID" value="NC_014034.1"/>
</dbReference>
<dbReference type="SMR" id="D5ARW9"/>
<dbReference type="STRING" id="272942.RCAP_rcc03267"/>
<dbReference type="GeneID" id="31492048"/>
<dbReference type="KEGG" id="rcp:RCAP_rcc03267"/>
<dbReference type="eggNOG" id="COG3604">
    <property type="taxonomic scope" value="Bacteria"/>
</dbReference>
<dbReference type="HOGENOM" id="CLU_000445_95_2_5"/>
<dbReference type="OrthoDB" id="9804019at2"/>
<dbReference type="Proteomes" id="UP000002361">
    <property type="component" value="Chromosome"/>
</dbReference>
<dbReference type="GO" id="GO:0005524">
    <property type="term" value="F:ATP binding"/>
    <property type="evidence" value="ECO:0007669"/>
    <property type="project" value="UniProtKB-KW"/>
</dbReference>
<dbReference type="GO" id="GO:0016887">
    <property type="term" value="F:ATP hydrolysis activity"/>
    <property type="evidence" value="ECO:0007669"/>
    <property type="project" value="InterPro"/>
</dbReference>
<dbReference type="GO" id="GO:0003700">
    <property type="term" value="F:DNA-binding transcription factor activity"/>
    <property type="evidence" value="ECO:0007669"/>
    <property type="project" value="InterPro"/>
</dbReference>
<dbReference type="GO" id="GO:0046872">
    <property type="term" value="F:metal ion binding"/>
    <property type="evidence" value="ECO:0007669"/>
    <property type="project" value="UniProtKB-KW"/>
</dbReference>
<dbReference type="GO" id="GO:0043565">
    <property type="term" value="F:sequence-specific DNA binding"/>
    <property type="evidence" value="ECO:0007669"/>
    <property type="project" value="InterPro"/>
</dbReference>
<dbReference type="GO" id="GO:0009399">
    <property type="term" value="P:nitrogen fixation"/>
    <property type="evidence" value="ECO:0007669"/>
    <property type="project" value="UniProtKB-KW"/>
</dbReference>
<dbReference type="GO" id="GO:0000160">
    <property type="term" value="P:phosphorelay signal transduction system"/>
    <property type="evidence" value="ECO:0007669"/>
    <property type="project" value="UniProtKB-KW"/>
</dbReference>
<dbReference type="CDD" id="cd00009">
    <property type="entry name" value="AAA"/>
    <property type="match status" value="1"/>
</dbReference>
<dbReference type="FunFam" id="3.40.50.300:FF:000006">
    <property type="entry name" value="DNA-binding transcriptional regulator NtrC"/>
    <property type="match status" value="1"/>
</dbReference>
<dbReference type="Gene3D" id="1.10.8.60">
    <property type="match status" value="1"/>
</dbReference>
<dbReference type="Gene3D" id="3.30.450.40">
    <property type="match status" value="1"/>
</dbReference>
<dbReference type="Gene3D" id="1.10.10.60">
    <property type="entry name" value="Homeodomain-like"/>
    <property type="match status" value="1"/>
</dbReference>
<dbReference type="Gene3D" id="3.40.50.300">
    <property type="entry name" value="P-loop containing nucleotide triphosphate hydrolases"/>
    <property type="match status" value="1"/>
</dbReference>
<dbReference type="InterPro" id="IPR003593">
    <property type="entry name" value="AAA+_ATPase"/>
</dbReference>
<dbReference type="InterPro" id="IPR003018">
    <property type="entry name" value="GAF"/>
</dbReference>
<dbReference type="InterPro" id="IPR029016">
    <property type="entry name" value="GAF-like_dom_sf"/>
</dbReference>
<dbReference type="InterPro" id="IPR009057">
    <property type="entry name" value="Homeodomain-like_sf"/>
</dbReference>
<dbReference type="InterPro" id="IPR002197">
    <property type="entry name" value="HTH_Fis"/>
</dbReference>
<dbReference type="InterPro" id="IPR010113">
    <property type="entry name" value="Nif-specific_regulatory_prot"/>
</dbReference>
<dbReference type="InterPro" id="IPR027417">
    <property type="entry name" value="P-loop_NTPase"/>
</dbReference>
<dbReference type="InterPro" id="IPR002078">
    <property type="entry name" value="Sigma_54_int"/>
</dbReference>
<dbReference type="InterPro" id="IPR025662">
    <property type="entry name" value="Sigma_54_int_dom_ATP-bd_1"/>
</dbReference>
<dbReference type="InterPro" id="IPR025943">
    <property type="entry name" value="Sigma_54_int_dom_ATP-bd_2"/>
</dbReference>
<dbReference type="InterPro" id="IPR025944">
    <property type="entry name" value="Sigma_54_int_dom_CS"/>
</dbReference>
<dbReference type="NCBIfam" id="TIGR01817">
    <property type="entry name" value="nifA"/>
    <property type="match status" value="1"/>
</dbReference>
<dbReference type="PANTHER" id="PTHR32071:SF117">
    <property type="entry name" value="PTS-DEPENDENT DIHYDROXYACETONE KINASE OPERON REGULATORY PROTEIN-RELATED"/>
    <property type="match status" value="1"/>
</dbReference>
<dbReference type="PANTHER" id="PTHR32071">
    <property type="entry name" value="TRANSCRIPTIONAL REGULATORY PROTEIN"/>
    <property type="match status" value="1"/>
</dbReference>
<dbReference type="Pfam" id="PF13185">
    <property type="entry name" value="GAF_2"/>
    <property type="match status" value="1"/>
</dbReference>
<dbReference type="Pfam" id="PF02954">
    <property type="entry name" value="HTH_8"/>
    <property type="match status" value="1"/>
</dbReference>
<dbReference type="Pfam" id="PF00158">
    <property type="entry name" value="Sigma54_activat"/>
    <property type="match status" value="1"/>
</dbReference>
<dbReference type="PRINTS" id="PR01590">
    <property type="entry name" value="HTHFIS"/>
</dbReference>
<dbReference type="SMART" id="SM00382">
    <property type="entry name" value="AAA"/>
    <property type="match status" value="1"/>
</dbReference>
<dbReference type="SMART" id="SM00065">
    <property type="entry name" value="GAF"/>
    <property type="match status" value="1"/>
</dbReference>
<dbReference type="SUPFAM" id="SSF55781">
    <property type="entry name" value="GAF domain-like"/>
    <property type="match status" value="1"/>
</dbReference>
<dbReference type="SUPFAM" id="SSF46689">
    <property type="entry name" value="Homeodomain-like"/>
    <property type="match status" value="1"/>
</dbReference>
<dbReference type="SUPFAM" id="SSF52540">
    <property type="entry name" value="P-loop containing nucleoside triphosphate hydrolases"/>
    <property type="match status" value="1"/>
</dbReference>
<dbReference type="PROSITE" id="PS00675">
    <property type="entry name" value="SIGMA54_INTERACT_1"/>
    <property type="match status" value="1"/>
</dbReference>
<dbReference type="PROSITE" id="PS00676">
    <property type="entry name" value="SIGMA54_INTERACT_2"/>
    <property type="match status" value="1"/>
</dbReference>
<dbReference type="PROSITE" id="PS00688">
    <property type="entry name" value="SIGMA54_INTERACT_3"/>
    <property type="match status" value="1"/>
</dbReference>
<dbReference type="PROSITE" id="PS50045">
    <property type="entry name" value="SIGMA54_INTERACT_4"/>
    <property type="match status" value="1"/>
</dbReference>
<gene>
    <name type="primary">nifA1</name>
    <name type="synonym">nifA</name>
    <name type="ordered locus">RCAP_rcc03267</name>
</gene>
<reference key="1">
    <citation type="journal article" date="2010" name="J. Bacteriol.">
        <title>Complete genome sequence of the photosynthetic purple nonsulfur bacterium Rhodobacter capsulatus SB 1003.</title>
        <authorList>
            <person name="Strnad H."/>
            <person name="Lapidus A."/>
            <person name="Paces J."/>
            <person name="Ulbrich P."/>
            <person name="Vlcek C."/>
            <person name="Paces V."/>
            <person name="Haselkorn R."/>
        </authorList>
    </citation>
    <scope>NUCLEOTIDE SEQUENCE [LARGE SCALE GENOMIC DNA]</scope>
    <source>
        <strain>ATCC BAA-309 / NBRC 16581 / SB1003</strain>
    </source>
</reference>
<reference key="2">
    <citation type="journal article" date="1989" name="Mol. Gen. Genet.">
        <title>The DNA sequence of the Rhodobacter capsulatus ntrA, ntrB and ntrC gene analogues required for nitrogen fixation.</title>
        <authorList>
            <person name="Jones R."/>
            <person name="Haselkorn R."/>
        </authorList>
    </citation>
    <scope>NUCLEOTIDE SEQUENCE [GENOMIC DNA] OF 20-121</scope>
    <source>
        <strain>ATCC BAA-309 / NBRC 16581 / SB1003</strain>
    </source>
</reference>